<keyword id="KW-0963">Cytoplasm</keyword>
<keyword id="KW-0489">Methyltransferase</keyword>
<keyword id="KW-0698">rRNA processing</keyword>
<keyword id="KW-0949">S-adenosyl-L-methionine</keyword>
<keyword id="KW-0808">Transferase</keyword>
<name>RSMG_LEPIC</name>
<comment type="function">
    <text evidence="1">Specifically methylates the N7 position of a guanine in 16S rRNA.</text>
</comment>
<comment type="subcellular location">
    <subcellularLocation>
        <location evidence="1">Cytoplasm</location>
    </subcellularLocation>
</comment>
<comment type="similarity">
    <text evidence="1">Belongs to the methyltransferase superfamily. RNA methyltransferase RsmG family.</text>
</comment>
<gene>
    <name evidence="1" type="primary">rsmG</name>
    <name type="ordered locus">LIC_13490</name>
</gene>
<organism>
    <name type="scientific">Leptospira interrogans serogroup Icterohaemorrhagiae serovar copenhageni (strain Fiocruz L1-130)</name>
    <dbReference type="NCBI Taxonomy" id="267671"/>
    <lineage>
        <taxon>Bacteria</taxon>
        <taxon>Pseudomonadati</taxon>
        <taxon>Spirochaetota</taxon>
        <taxon>Spirochaetia</taxon>
        <taxon>Leptospirales</taxon>
        <taxon>Leptospiraceae</taxon>
        <taxon>Leptospira</taxon>
    </lineage>
</organism>
<feature type="chain" id="PRO_0000342923" description="Ribosomal RNA small subunit methyltransferase G">
    <location>
        <begin position="1"/>
        <end position="254"/>
    </location>
</feature>
<feature type="binding site" evidence="1">
    <location>
        <position position="92"/>
    </location>
    <ligand>
        <name>S-adenosyl-L-methionine</name>
        <dbReference type="ChEBI" id="CHEBI:59789"/>
    </ligand>
</feature>
<feature type="binding site" evidence="1">
    <location>
        <begin position="143"/>
        <end position="144"/>
    </location>
    <ligand>
        <name>S-adenosyl-L-methionine</name>
        <dbReference type="ChEBI" id="CHEBI:59789"/>
    </ligand>
</feature>
<feature type="binding site" evidence="1">
    <location>
        <position position="156"/>
    </location>
    <ligand>
        <name>S-adenosyl-L-methionine</name>
        <dbReference type="ChEBI" id="CHEBI:59789"/>
    </ligand>
</feature>
<accession>Q72LR3</accession>
<reference key="1">
    <citation type="journal article" date="2004" name="J. Bacteriol.">
        <title>Comparative genomics of two Leptospira interrogans serovars reveals novel insights into physiology and pathogenesis.</title>
        <authorList>
            <person name="Nascimento A.L.T.O."/>
            <person name="Ko A.I."/>
            <person name="Martins E.A.L."/>
            <person name="Monteiro-Vitorello C.B."/>
            <person name="Ho P.L."/>
            <person name="Haake D.A."/>
            <person name="Verjovski-Almeida S."/>
            <person name="Hartskeerl R.A."/>
            <person name="Marques M.V."/>
            <person name="Oliveira M.C."/>
            <person name="Menck C.F.M."/>
            <person name="Leite L.C.C."/>
            <person name="Carrer H."/>
            <person name="Coutinho L.L."/>
            <person name="Degrave W.M."/>
            <person name="Dellagostin O.A."/>
            <person name="El-Dorry H."/>
            <person name="Ferro E.S."/>
            <person name="Ferro M.I.T."/>
            <person name="Furlan L.R."/>
            <person name="Gamberini M."/>
            <person name="Giglioti E.A."/>
            <person name="Goes-Neto A."/>
            <person name="Goldman G.H."/>
            <person name="Goldman M.H.S."/>
            <person name="Harakava R."/>
            <person name="Jeronimo S.M.B."/>
            <person name="Junqueira-de-Azevedo I.L.M."/>
            <person name="Kimura E.T."/>
            <person name="Kuramae E.E."/>
            <person name="Lemos E.G.M."/>
            <person name="Lemos M.V.F."/>
            <person name="Marino C.L."/>
            <person name="Nunes L.R."/>
            <person name="de Oliveira R.C."/>
            <person name="Pereira G.G."/>
            <person name="Reis M.S."/>
            <person name="Schriefer A."/>
            <person name="Siqueira W.J."/>
            <person name="Sommer P."/>
            <person name="Tsai S.M."/>
            <person name="Simpson A.J.G."/>
            <person name="Ferro J.A."/>
            <person name="Camargo L.E.A."/>
            <person name="Kitajima J.P."/>
            <person name="Setubal J.C."/>
            <person name="Van Sluys M.A."/>
        </authorList>
    </citation>
    <scope>NUCLEOTIDE SEQUENCE [LARGE SCALE GENOMIC DNA]</scope>
    <source>
        <strain>Fiocruz L1-130</strain>
    </source>
</reference>
<proteinExistence type="inferred from homology"/>
<sequence length="254" mass="29393">MQDPEQFSIESILQRLKERFPTEADEISSFFDWDLVHKFTVFLKEKNEAGGFFSKRDSEEILDRHVLESIYHVYRITKKIGSWKGTQLGDAGTGPGIPGFFFRCLKEHPIVVLIDSQKRKLSHTENFVRSNQIDGVKFQFIRAEESKLSLNYVTSRGFIPYPYSIEAICNLLKINGTYVPFLGKHDMDTNLEKKVLSYSGFKLEFSEDLVPLEFLGMRHIKFLKKVSSPRHGYPRAWKEISKESKGANGKDRID</sequence>
<evidence type="ECO:0000255" key="1">
    <source>
        <dbReference type="HAMAP-Rule" id="MF_00074"/>
    </source>
</evidence>
<dbReference type="EC" id="2.1.1.-" evidence="1"/>
<dbReference type="EMBL" id="AE016823">
    <property type="protein sequence ID" value="AAS72026.1"/>
    <property type="molecule type" value="Genomic_DNA"/>
</dbReference>
<dbReference type="RefSeq" id="WP_001153932.1">
    <property type="nucleotide sequence ID" value="NC_005823.1"/>
</dbReference>
<dbReference type="SMR" id="Q72LR3"/>
<dbReference type="KEGG" id="lic:LIC_13490"/>
<dbReference type="HOGENOM" id="CLU_1093258_0_0_12"/>
<dbReference type="Proteomes" id="UP000007037">
    <property type="component" value="Chromosome I"/>
</dbReference>
<dbReference type="GO" id="GO:0005829">
    <property type="term" value="C:cytosol"/>
    <property type="evidence" value="ECO:0007669"/>
    <property type="project" value="TreeGrafter"/>
</dbReference>
<dbReference type="GO" id="GO:0070043">
    <property type="term" value="F:rRNA (guanine-N7-)-methyltransferase activity"/>
    <property type="evidence" value="ECO:0007669"/>
    <property type="project" value="UniProtKB-UniRule"/>
</dbReference>
<dbReference type="Gene3D" id="3.40.50.150">
    <property type="entry name" value="Vaccinia Virus protein VP39"/>
    <property type="match status" value="1"/>
</dbReference>
<dbReference type="HAMAP" id="MF_00074">
    <property type="entry name" value="16SrRNA_methyltr_G"/>
    <property type="match status" value="1"/>
</dbReference>
<dbReference type="InterPro" id="IPR003682">
    <property type="entry name" value="rRNA_ssu_MeTfrase_G"/>
</dbReference>
<dbReference type="InterPro" id="IPR029063">
    <property type="entry name" value="SAM-dependent_MTases_sf"/>
</dbReference>
<dbReference type="PANTHER" id="PTHR31760">
    <property type="entry name" value="S-ADENOSYL-L-METHIONINE-DEPENDENT METHYLTRANSFERASES SUPERFAMILY PROTEIN"/>
    <property type="match status" value="1"/>
</dbReference>
<dbReference type="PANTHER" id="PTHR31760:SF0">
    <property type="entry name" value="S-ADENOSYL-L-METHIONINE-DEPENDENT METHYLTRANSFERASES SUPERFAMILY PROTEIN"/>
    <property type="match status" value="1"/>
</dbReference>
<dbReference type="Pfam" id="PF02527">
    <property type="entry name" value="GidB"/>
    <property type="match status" value="1"/>
</dbReference>
<dbReference type="PIRSF" id="PIRSF003078">
    <property type="entry name" value="GidB"/>
    <property type="match status" value="1"/>
</dbReference>
<dbReference type="SUPFAM" id="SSF53335">
    <property type="entry name" value="S-adenosyl-L-methionine-dependent methyltransferases"/>
    <property type="match status" value="1"/>
</dbReference>
<protein>
    <recommendedName>
        <fullName evidence="1">Ribosomal RNA small subunit methyltransferase G</fullName>
        <ecNumber evidence="1">2.1.1.-</ecNumber>
    </recommendedName>
    <alternativeName>
        <fullName evidence="1">16S rRNA 7-methylguanosine methyltransferase</fullName>
        <shortName evidence="1">16S rRNA m7G methyltransferase</shortName>
    </alternativeName>
</protein>